<evidence type="ECO:0000255" key="1">
    <source>
        <dbReference type="HAMAP-Rule" id="MF_01006"/>
    </source>
</evidence>
<keyword id="KW-0046">Antibiotic resistance</keyword>
<keyword id="KW-0997">Cell inner membrane</keyword>
<keyword id="KW-1003">Cell membrane</keyword>
<keyword id="KW-0133">Cell shape</keyword>
<keyword id="KW-0961">Cell wall biogenesis/degradation</keyword>
<keyword id="KW-0378">Hydrolase</keyword>
<keyword id="KW-0472">Membrane</keyword>
<keyword id="KW-0573">Peptidoglycan synthesis</keyword>
<keyword id="KW-0812">Transmembrane</keyword>
<keyword id="KW-1133">Transmembrane helix</keyword>
<feature type="chain" id="PRO_0000227630" description="Undecaprenyl-diphosphatase 1">
    <location>
        <begin position="1"/>
        <end position="276"/>
    </location>
</feature>
<feature type="transmembrane region" description="Helical" evidence="1">
    <location>
        <begin position="43"/>
        <end position="63"/>
    </location>
</feature>
<feature type="transmembrane region" description="Helical" evidence="1">
    <location>
        <begin position="85"/>
        <end position="105"/>
    </location>
</feature>
<feature type="transmembrane region" description="Helical" evidence="1">
    <location>
        <begin position="109"/>
        <end position="129"/>
    </location>
</feature>
<feature type="transmembrane region" description="Helical" evidence="1">
    <location>
        <begin position="184"/>
        <end position="204"/>
    </location>
</feature>
<feature type="transmembrane region" description="Helical" evidence="1">
    <location>
        <begin position="214"/>
        <end position="234"/>
    </location>
</feature>
<feature type="transmembrane region" description="Helical" evidence="1">
    <location>
        <begin position="254"/>
        <end position="274"/>
    </location>
</feature>
<accession>Q3KD12</accession>
<reference key="1">
    <citation type="journal article" date="2009" name="Genome Biol.">
        <title>Genomic and genetic analyses of diversity and plant interactions of Pseudomonas fluorescens.</title>
        <authorList>
            <person name="Silby M.W."/>
            <person name="Cerdeno-Tarraga A.M."/>
            <person name="Vernikos G.S."/>
            <person name="Giddens S.R."/>
            <person name="Jackson R.W."/>
            <person name="Preston G.M."/>
            <person name="Zhang X.-X."/>
            <person name="Moon C.D."/>
            <person name="Gehrig S.M."/>
            <person name="Godfrey S.A.C."/>
            <person name="Knight C.G."/>
            <person name="Malone J.G."/>
            <person name="Robinson Z."/>
            <person name="Spiers A.J."/>
            <person name="Harris S."/>
            <person name="Challis G.L."/>
            <person name="Yaxley A.M."/>
            <person name="Harris D."/>
            <person name="Seeger K."/>
            <person name="Murphy L."/>
            <person name="Rutter S."/>
            <person name="Squares R."/>
            <person name="Quail M.A."/>
            <person name="Saunders E."/>
            <person name="Mavromatis K."/>
            <person name="Brettin T.S."/>
            <person name="Bentley S.D."/>
            <person name="Hothersall J."/>
            <person name="Stephens E."/>
            <person name="Thomas C.M."/>
            <person name="Parkhill J."/>
            <person name="Levy S.B."/>
            <person name="Rainey P.B."/>
            <person name="Thomson N.R."/>
        </authorList>
    </citation>
    <scope>NUCLEOTIDE SEQUENCE [LARGE SCALE GENOMIC DNA]</scope>
    <source>
        <strain>Pf0-1</strain>
    </source>
</reference>
<name>UPPP1_PSEPF</name>
<proteinExistence type="inferred from homology"/>
<sequence>MDLWTALQALILGVVEGLTEFLPISSTGHQIIVADLLDFGGERAMAFNIIIQLGAILAVVWEFRRKILDVVIGLPTQPSARRFTANLLIAFLPAVVLGVIFADLIHHYLFNPITVAAALVVGGIVMLWAEQRQHEVHAETVDEIRWTDALKIGFAQCLAMIPGTSRSGSTIIGGLLFGLSRKTATEFSFFLAMPTMVGAAVYSGYKYRDLFVPADFPVFAIGFVTAFIFAMIAVRGLLKFIGSHSYAAFAWYRIVFGLVILATWQFGWVDWTAAQP</sequence>
<protein>
    <recommendedName>
        <fullName evidence="1">Undecaprenyl-diphosphatase 1</fullName>
        <ecNumber evidence="1">3.6.1.27</ecNumber>
    </recommendedName>
    <alternativeName>
        <fullName evidence="1">Bacitracin resistance protein 1</fullName>
    </alternativeName>
    <alternativeName>
        <fullName evidence="1">Undecaprenyl pyrophosphate phosphatase 1</fullName>
    </alternativeName>
</protein>
<organism>
    <name type="scientific">Pseudomonas fluorescens (strain Pf0-1)</name>
    <dbReference type="NCBI Taxonomy" id="205922"/>
    <lineage>
        <taxon>Bacteria</taxon>
        <taxon>Pseudomonadati</taxon>
        <taxon>Pseudomonadota</taxon>
        <taxon>Gammaproteobacteria</taxon>
        <taxon>Pseudomonadales</taxon>
        <taxon>Pseudomonadaceae</taxon>
        <taxon>Pseudomonas</taxon>
    </lineage>
</organism>
<comment type="function">
    <text evidence="1">Catalyzes the dephosphorylation of undecaprenyl diphosphate (UPP). Confers resistance to bacitracin.</text>
</comment>
<comment type="catalytic activity">
    <reaction evidence="1">
        <text>di-trans,octa-cis-undecaprenyl diphosphate + H2O = di-trans,octa-cis-undecaprenyl phosphate + phosphate + H(+)</text>
        <dbReference type="Rhea" id="RHEA:28094"/>
        <dbReference type="ChEBI" id="CHEBI:15377"/>
        <dbReference type="ChEBI" id="CHEBI:15378"/>
        <dbReference type="ChEBI" id="CHEBI:43474"/>
        <dbReference type="ChEBI" id="CHEBI:58405"/>
        <dbReference type="ChEBI" id="CHEBI:60392"/>
        <dbReference type="EC" id="3.6.1.27"/>
    </reaction>
</comment>
<comment type="subcellular location">
    <subcellularLocation>
        <location evidence="1">Cell inner membrane</location>
        <topology evidence="1">Multi-pass membrane protein</topology>
    </subcellularLocation>
</comment>
<comment type="miscellaneous">
    <text>Bacitracin is thought to be involved in the inhibition of peptidoglycan synthesis by sequestering undecaprenyl diphosphate, thereby reducing the pool of lipid carrier available.</text>
</comment>
<comment type="similarity">
    <text evidence="1">Belongs to the UppP family.</text>
</comment>
<dbReference type="EC" id="3.6.1.27" evidence="1"/>
<dbReference type="EMBL" id="CP000094">
    <property type="protein sequence ID" value="ABA74343.1"/>
    <property type="molecule type" value="Genomic_DNA"/>
</dbReference>
<dbReference type="RefSeq" id="WP_011334017.1">
    <property type="nucleotide sequence ID" value="NC_007492.2"/>
</dbReference>
<dbReference type="SMR" id="Q3KD12"/>
<dbReference type="KEGG" id="pfo:Pfl01_2602"/>
<dbReference type="eggNOG" id="COG1968">
    <property type="taxonomic scope" value="Bacteria"/>
</dbReference>
<dbReference type="HOGENOM" id="CLU_060296_2_0_6"/>
<dbReference type="Proteomes" id="UP000002704">
    <property type="component" value="Chromosome"/>
</dbReference>
<dbReference type="GO" id="GO:0005886">
    <property type="term" value="C:plasma membrane"/>
    <property type="evidence" value="ECO:0007669"/>
    <property type="project" value="UniProtKB-SubCell"/>
</dbReference>
<dbReference type="GO" id="GO:0050380">
    <property type="term" value="F:undecaprenyl-diphosphatase activity"/>
    <property type="evidence" value="ECO:0007669"/>
    <property type="project" value="UniProtKB-UniRule"/>
</dbReference>
<dbReference type="GO" id="GO:0071555">
    <property type="term" value="P:cell wall organization"/>
    <property type="evidence" value="ECO:0007669"/>
    <property type="project" value="UniProtKB-KW"/>
</dbReference>
<dbReference type="GO" id="GO:0009252">
    <property type="term" value="P:peptidoglycan biosynthetic process"/>
    <property type="evidence" value="ECO:0007669"/>
    <property type="project" value="UniProtKB-KW"/>
</dbReference>
<dbReference type="GO" id="GO:0008360">
    <property type="term" value="P:regulation of cell shape"/>
    <property type="evidence" value="ECO:0007669"/>
    <property type="project" value="UniProtKB-KW"/>
</dbReference>
<dbReference type="GO" id="GO:0046677">
    <property type="term" value="P:response to antibiotic"/>
    <property type="evidence" value="ECO:0007669"/>
    <property type="project" value="UniProtKB-UniRule"/>
</dbReference>
<dbReference type="HAMAP" id="MF_01006">
    <property type="entry name" value="Undec_diphosphatase"/>
    <property type="match status" value="1"/>
</dbReference>
<dbReference type="InterPro" id="IPR003824">
    <property type="entry name" value="UppP"/>
</dbReference>
<dbReference type="NCBIfam" id="NF001389">
    <property type="entry name" value="PRK00281.1-2"/>
    <property type="match status" value="1"/>
</dbReference>
<dbReference type="NCBIfam" id="NF001390">
    <property type="entry name" value="PRK00281.1-4"/>
    <property type="match status" value="1"/>
</dbReference>
<dbReference type="NCBIfam" id="TIGR00753">
    <property type="entry name" value="undec_PP_bacA"/>
    <property type="match status" value="1"/>
</dbReference>
<dbReference type="PANTHER" id="PTHR30622">
    <property type="entry name" value="UNDECAPRENYL-DIPHOSPHATASE"/>
    <property type="match status" value="1"/>
</dbReference>
<dbReference type="PANTHER" id="PTHR30622:SF3">
    <property type="entry name" value="UNDECAPRENYL-DIPHOSPHATASE"/>
    <property type="match status" value="1"/>
</dbReference>
<dbReference type="Pfam" id="PF02673">
    <property type="entry name" value="BacA"/>
    <property type="match status" value="1"/>
</dbReference>
<gene>
    <name evidence="1" type="primary">uppP1</name>
    <name type="ordered locus">Pfl01_2602</name>
</gene>